<comment type="function">
    <text evidence="1">One of the primary rRNA binding proteins, it binds specifically to the 5'-end of 16S ribosomal RNA.</text>
</comment>
<comment type="subunit">
    <text evidence="1">Part of the 30S ribosomal subunit.</text>
</comment>
<comment type="similarity">
    <text evidence="1">Belongs to the universal ribosomal protein uS17 family.</text>
</comment>
<reference key="1">
    <citation type="journal article" date="2014" name="Stand. Genomic Sci.">
        <title>Complete genome sequence of Burkholderia phymatum STM815(T), a broad host range and efficient nitrogen-fixing symbiont of Mimosa species.</title>
        <authorList>
            <person name="Moulin L."/>
            <person name="Klonowska A."/>
            <person name="Caroline B."/>
            <person name="Booth K."/>
            <person name="Vriezen J.A."/>
            <person name="Melkonian R."/>
            <person name="James E.K."/>
            <person name="Young J.P."/>
            <person name="Bena G."/>
            <person name="Hauser L."/>
            <person name="Land M."/>
            <person name="Kyrpides N."/>
            <person name="Bruce D."/>
            <person name="Chain P."/>
            <person name="Copeland A."/>
            <person name="Pitluck S."/>
            <person name="Woyke T."/>
            <person name="Lizotte-Waniewski M."/>
            <person name="Bristow J."/>
            <person name="Riley M."/>
        </authorList>
    </citation>
    <scope>NUCLEOTIDE SEQUENCE [LARGE SCALE GENOMIC DNA]</scope>
    <source>
        <strain>DSM 17167 / CIP 108236 / LMG 21445 / STM815</strain>
    </source>
</reference>
<protein>
    <recommendedName>
        <fullName evidence="1">Small ribosomal subunit protein uS17</fullName>
    </recommendedName>
    <alternativeName>
        <fullName evidence="2">30S ribosomal protein S17</fullName>
    </alternativeName>
</protein>
<evidence type="ECO:0000255" key="1">
    <source>
        <dbReference type="HAMAP-Rule" id="MF_01345"/>
    </source>
</evidence>
<evidence type="ECO:0000305" key="2"/>
<proteinExistence type="inferred from homology"/>
<feature type="chain" id="PRO_1000143234" description="Small ribosomal subunit protein uS17">
    <location>
        <begin position="1"/>
        <end position="90"/>
    </location>
</feature>
<sequence>MNDSVKTSLKRTLVGKVVSNKMDKTVTVLVEHRVKHPIYGKYVVRSKKYHAHDEANTYNEGDLVEIQETRPLSKTKAWTVSRLVEAARII</sequence>
<accession>B2JI57</accession>
<organism>
    <name type="scientific">Paraburkholderia phymatum (strain DSM 17167 / CIP 108236 / LMG 21445 / STM815)</name>
    <name type="common">Burkholderia phymatum</name>
    <dbReference type="NCBI Taxonomy" id="391038"/>
    <lineage>
        <taxon>Bacteria</taxon>
        <taxon>Pseudomonadati</taxon>
        <taxon>Pseudomonadota</taxon>
        <taxon>Betaproteobacteria</taxon>
        <taxon>Burkholderiales</taxon>
        <taxon>Burkholderiaceae</taxon>
        <taxon>Paraburkholderia</taxon>
    </lineage>
</organism>
<gene>
    <name evidence="1" type="primary">rpsQ</name>
    <name type="ordered locus">Bphy_2831</name>
</gene>
<dbReference type="EMBL" id="CP001043">
    <property type="protein sequence ID" value="ACC72003.1"/>
    <property type="molecule type" value="Genomic_DNA"/>
</dbReference>
<dbReference type="RefSeq" id="WP_012402190.1">
    <property type="nucleotide sequence ID" value="NZ_CADFGH010000028.1"/>
</dbReference>
<dbReference type="SMR" id="B2JI57"/>
<dbReference type="STRING" id="391038.Bphy_2831"/>
<dbReference type="KEGG" id="bph:Bphy_2831"/>
<dbReference type="eggNOG" id="COG0186">
    <property type="taxonomic scope" value="Bacteria"/>
</dbReference>
<dbReference type="HOGENOM" id="CLU_073626_1_1_4"/>
<dbReference type="OrthoDB" id="9811714at2"/>
<dbReference type="Proteomes" id="UP000001192">
    <property type="component" value="Chromosome 1"/>
</dbReference>
<dbReference type="GO" id="GO:0022627">
    <property type="term" value="C:cytosolic small ribosomal subunit"/>
    <property type="evidence" value="ECO:0007669"/>
    <property type="project" value="TreeGrafter"/>
</dbReference>
<dbReference type="GO" id="GO:0019843">
    <property type="term" value="F:rRNA binding"/>
    <property type="evidence" value="ECO:0007669"/>
    <property type="project" value="UniProtKB-UniRule"/>
</dbReference>
<dbReference type="GO" id="GO:0003735">
    <property type="term" value="F:structural constituent of ribosome"/>
    <property type="evidence" value="ECO:0007669"/>
    <property type="project" value="InterPro"/>
</dbReference>
<dbReference type="GO" id="GO:0006412">
    <property type="term" value="P:translation"/>
    <property type="evidence" value="ECO:0007669"/>
    <property type="project" value="UniProtKB-UniRule"/>
</dbReference>
<dbReference type="CDD" id="cd00364">
    <property type="entry name" value="Ribosomal_uS17"/>
    <property type="match status" value="1"/>
</dbReference>
<dbReference type="Gene3D" id="2.40.50.140">
    <property type="entry name" value="Nucleic acid-binding proteins"/>
    <property type="match status" value="1"/>
</dbReference>
<dbReference type="HAMAP" id="MF_01345_B">
    <property type="entry name" value="Ribosomal_uS17_B"/>
    <property type="match status" value="1"/>
</dbReference>
<dbReference type="InterPro" id="IPR012340">
    <property type="entry name" value="NA-bd_OB-fold"/>
</dbReference>
<dbReference type="InterPro" id="IPR000266">
    <property type="entry name" value="Ribosomal_uS17"/>
</dbReference>
<dbReference type="InterPro" id="IPR019984">
    <property type="entry name" value="Ribosomal_uS17_bact/chlr"/>
</dbReference>
<dbReference type="InterPro" id="IPR019979">
    <property type="entry name" value="Ribosomal_uS17_CS"/>
</dbReference>
<dbReference type="NCBIfam" id="NF004123">
    <property type="entry name" value="PRK05610.1"/>
    <property type="match status" value="1"/>
</dbReference>
<dbReference type="NCBIfam" id="TIGR03635">
    <property type="entry name" value="uS17_bact"/>
    <property type="match status" value="1"/>
</dbReference>
<dbReference type="PANTHER" id="PTHR10744">
    <property type="entry name" value="40S RIBOSOMAL PROTEIN S11 FAMILY MEMBER"/>
    <property type="match status" value="1"/>
</dbReference>
<dbReference type="PANTHER" id="PTHR10744:SF1">
    <property type="entry name" value="SMALL RIBOSOMAL SUBUNIT PROTEIN US17M"/>
    <property type="match status" value="1"/>
</dbReference>
<dbReference type="Pfam" id="PF00366">
    <property type="entry name" value="Ribosomal_S17"/>
    <property type="match status" value="1"/>
</dbReference>
<dbReference type="PRINTS" id="PR00973">
    <property type="entry name" value="RIBOSOMALS17"/>
</dbReference>
<dbReference type="SUPFAM" id="SSF50249">
    <property type="entry name" value="Nucleic acid-binding proteins"/>
    <property type="match status" value="1"/>
</dbReference>
<dbReference type="PROSITE" id="PS00056">
    <property type="entry name" value="RIBOSOMAL_S17"/>
    <property type="match status" value="1"/>
</dbReference>
<keyword id="KW-1185">Reference proteome</keyword>
<keyword id="KW-0687">Ribonucleoprotein</keyword>
<keyword id="KW-0689">Ribosomal protein</keyword>
<keyword id="KW-0694">RNA-binding</keyword>
<keyword id="KW-0699">rRNA-binding</keyword>
<name>RS17_PARP8</name>